<accession>Q895J5</accession>
<comment type="function">
    <text evidence="1">Responsible for synthesis of pseudouridine from uracil-55 in the psi GC loop of transfer RNAs.</text>
</comment>
<comment type="catalytic activity">
    <reaction evidence="1">
        <text>uridine(55) in tRNA = pseudouridine(55) in tRNA</text>
        <dbReference type="Rhea" id="RHEA:42532"/>
        <dbReference type="Rhea" id="RHEA-COMP:10101"/>
        <dbReference type="Rhea" id="RHEA-COMP:10102"/>
        <dbReference type="ChEBI" id="CHEBI:65314"/>
        <dbReference type="ChEBI" id="CHEBI:65315"/>
        <dbReference type="EC" id="5.4.99.25"/>
    </reaction>
</comment>
<comment type="similarity">
    <text evidence="1">Belongs to the pseudouridine synthase TruB family. Type 1 subfamily.</text>
</comment>
<sequence length="289" mass="33102">MNGVINVYKPQNITSFDVVRIIKKISRIKKVGHTGTLDPMATGVLPICLGGSTKIVDFIMNEHKEYRAKLKLGLITDTYDREGKVLKEEDASKILEEEVVNCINSFKGEIIQIPPMYSAIKIKGERLYNLARKGIEVEREGRKINIYNIEVLKVNLPYVEFKVNCSKGTYIRSLCYDIGNKLGMGATMWELERTKTGNFSIENSINLEDINEENIQEFIIPAEKALSKYERIEIDEYFSRLLKNGVKVKDKRLLDKIKANDILRVYQEDKFIGLGQKTKEGFKIVKLLV</sequence>
<reference key="1">
    <citation type="journal article" date="2003" name="Proc. Natl. Acad. Sci. U.S.A.">
        <title>The genome sequence of Clostridium tetani, the causative agent of tetanus disease.</title>
        <authorList>
            <person name="Brueggemann H."/>
            <person name="Baeumer S."/>
            <person name="Fricke W.F."/>
            <person name="Wiezer A."/>
            <person name="Liesegang H."/>
            <person name="Decker I."/>
            <person name="Herzberg C."/>
            <person name="Martinez-Arias R."/>
            <person name="Merkl R."/>
            <person name="Henne A."/>
            <person name="Gottschalk G."/>
        </authorList>
    </citation>
    <scope>NUCLEOTIDE SEQUENCE [LARGE SCALE GENOMIC DNA]</scope>
    <source>
        <strain>Massachusetts / E88</strain>
    </source>
</reference>
<keyword id="KW-0413">Isomerase</keyword>
<keyword id="KW-1185">Reference proteome</keyword>
<keyword id="KW-0819">tRNA processing</keyword>
<feature type="chain" id="PRO_0000121822" description="tRNA pseudouridine synthase B">
    <location>
        <begin position="1"/>
        <end position="289"/>
    </location>
</feature>
<feature type="active site" description="Nucleophile" evidence="1">
    <location>
        <position position="38"/>
    </location>
</feature>
<dbReference type="EC" id="5.4.99.25" evidence="1"/>
<dbReference type="EMBL" id="AE015927">
    <property type="protein sequence ID" value="AAO35845.1"/>
    <property type="molecule type" value="Genomic_DNA"/>
</dbReference>
<dbReference type="RefSeq" id="WP_011099507.1">
    <property type="nucleotide sequence ID" value="NC_004557.1"/>
</dbReference>
<dbReference type="SMR" id="Q895J5"/>
<dbReference type="STRING" id="212717.CTC_01278"/>
<dbReference type="GeneID" id="24254530"/>
<dbReference type="KEGG" id="ctc:CTC_01278"/>
<dbReference type="HOGENOM" id="CLU_032087_0_1_9"/>
<dbReference type="OrthoDB" id="9802309at2"/>
<dbReference type="Proteomes" id="UP000001412">
    <property type="component" value="Chromosome"/>
</dbReference>
<dbReference type="GO" id="GO:0003723">
    <property type="term" value="F:RNA binding"/>
    <property type="evidence" value="ECO:0007669"/>
    <property type="project" value="InterPro"/>
</dbReference>
<dbReference type="GO" id="GO:0160148">
    <property type="term" value="F:tRNA pseudouridine(55) synthase activity"/>
    <property type="evidence" value="ECO:0007669"/>
    <property type="project" value="UniProtKB-EC"/>
</dbReference>
<dbReference type="GO" id="GO:1990481">
    <property type="term" value="P:mRNA pseudouridine synthesis"/>
    <property type="evidence" value="ECO:0007669"/>
    <property type="project" value="TreeGrafter"/>
</dbReference>
<dbReference type="GO" id="GO:0031119">
    <property type="term" value="P:tRNA pseudouridine synthesis"/>
    <property type="evidence" value="ECO:0007669"/>
    <property type="project" value="UniProtKB-UniRule"/>
</dbReference>
<dbReference type="CDD" id="cd02573">
    <property type="entry name" value="PseudoU_synth_EcTruB"/>
    <property type="match status" value="1"/>
</dbReference>
<dbReference type="FunFam" id="3.30.2350.10:FF:000011">
    <property type="entry name" value="tRNA pseudouridine synthase B"/>
    <property type="match status" value="1"/>
</dbReference>
<dbReference type="Gene3D" id="3.30.2350.10">
    <property type="entry name" value="Pseudouridine synthase"/>
    <property type="match status" value="1"/>
</dbReference>
<dbReference type="HAMAP" id="MF_01080">
    <property type="entry name" value="TruB_bact"/>
    <property type="match status" value="1"/>
</dbReference>
<dbReference type="InterPro" id="IPR020103">
    <property type="entry name" value="PsdUridine_synth_cat_dom_sf"/>
</dbReference>
<dbReference type="InterPro" id="IPR002501">
    <property type="entry name" value="PsdUridine_synth_N"/>
</dbReference>
<dbReference type="InterPro" id="IPR014780">
    <property type="entry name" value="tRNA_psdUridine_synth_TruB"/>
</dbReference>
<dbReference type="InterPro" id="IPR032819">
    <property type="entry name" value="TruB_C"/>
</dbReference>
<dbReference type="NCBIfam" id="TIGR00431">
    <property type="entry name" value="TruB"/>
    <property type="match status" value="1"/>
</dbReference>
<dbReference type="PANTHER" id="PTHR13767:SF2">
    <property type="entry name" value="PSEUDOURIDYLATE SYNTHASE TRUB1"/>
    <property type="match status" value="1"/>
</dbReference>
<dbReference type="PANTHER" id="PTHR13767">
    <property type="entry name" value="TRNA-PSEUDOURIDINE SYNTHASE"/>
    <property type="match status" value="1"/>
</dbReference>
<dbReference type="Pfam" id="PF16198">
    <property type="entry name" value="TruB_C_2"/>
    <property type="match status" value="1"/>
</dbReference>
<dbReference type="Pfam" id="PF01509">
    <property type="entry name" value="TruB_N"/>
    <property type="match status" value="1"/>
</dbReference>
<dbReference type="SUPFAM" id="SSF55120">
    <property type="entry name" value="Pseudouridine synthase"/>
    <property type="match status" value="1"/>
</dbReference>
<gene>
    <name evidence="1" type="primary">truB</name>
    <name type="ordered locus">CTC_01278</name>
</gene>
<evidence type="ECO:0000255" key="1">
    <source>
        <dbReference type="HAMAP-Rule" id="MF_01080"/>
    </source>
</evidence>
<proteinExistence type="inferred from homology"/>
<name>TRUB_CLOTE</name>
<protein>
    <recommendedName>
        <fullName evidence="1">tRNA pseudouridine synthase B</fullName>
        <ecNumber evidence="1">5.4.99.25</ecNumber>
    </recommendedName>
    <alternativeName>
        <fullName evidence="1">tRNA pseudouridine(55) synthase</fullName>
        <shortName evidence="1">Psi55 synthase</shortName>
    </alternativeName>
    <alternativeName>
        <fullName evidence="1">tRNA pseudouridylate synthase</fullName>
    </alternativeName>
    <alternativeName>
        <fullName evidence="1">tRNA-uridine isomerase</fullName>
    </alternativeName>
</protein>
<organism>
    <name type="scientific">Clostridium tetani (strain Massachusetts / E88)</name>
    <dbReference type="NCBI Taxonomy" id="212717"/>
    <lineage>
        <taxon>Bacteria</taxon>
        <taxon>Bacillati</taxon>
        <taxon>Bacillota</taxon>
        <taxon>Clostridia</taxon>
        <taxon>Eubacteriales</taxon>
        <taxon>Clostridiaceae</taxon>
        <taxon>Clostridium</taxon>
    </lineage>
</organism>